<gene>
    <name type="primary">RLIM</name>
    <name type="synonym">RNF12</name>
</gene>
<sequence length="624" mass="68549">MENSDSNDKGSGDQSAAQRRSQMDRLDREEAFYQFVNNLSEEDYRLMRDNNLLGTPGESTEEELLRRLQQIKEGPPPQNSDENRGGDSSDDVSNGDSIIDWLNSVRQTGNTTRSGQRGNQSWRAVSRTNPNSGDFRFSLEINVNRNNGSQNSENENEPSARRSSGENVENNSQRQVENPRSESTSARPSRSERNSTEALTEVPPTRGQRRARSRSPDHRRTRARAERSRSPLHPMSEIPRRSHHSISSQTFEHPLVNETEGSSRTRHHVTLRQQISGPELLSRGLFAASGTRNASQGAGSSDTAASGESTGSGQRPPTIVLDLQVRRVRPGEYRQRDSIASRTRSRSQTPNNTVTYESERGGFRRTFSRSERAGVRTYVSTIRIPIRRILNTGLSETTSVAIQTMLRQIMTGFGELSYFMYSDSDSEPTGSVSNRNMERAESRSGRGGSGGGSSSGSSSSSSSSSSSSSSSSSSSSPSSSSGGESSETSSDLFEGSNEGSSSSGSSGARREGRHRAPVTFDESGSLPFLSLAQFFLLNEDDDDQPRGLTKEQIDNLAMRSFGENDALKTCSVCITEYTEGNKLRKLPCSHEYHVHCIDRWLSENSTCPICRRAVLASGNRESVV</sequence>
<feature type="chain" id="PRO_0000056052" description="E3 ubiquitin-protein ligase RLIM">
    <location>
        <begin position="1"/>
        <end position="624"/>
    </location>
</feature>
<feature type="zinc finger region" description="RING-type" evidence="4">
    <location>
        <begin position="570"/>
        <end position="611"/>
    </location>
</feature>
<feature type="region of interest" description="Disordered" evidence="5">
    <location>
        <begin position="1"/>
        <end position="25"/>
    </location>
</feature>
<feature type="region of interest" description="Disordered" evidence="5">
    <location>
        <begin position="72"/>
        <end position="251"/>
    </location>
</feature>
<feature type="region of interest" description="Disordered" evidence="5">
    <location>
        <begin position="257"/>
        <end position="276"/>
    </location>
</feature>
<feature type="region of interest" description="Disordered" evidence="5">
    <location>
        <begin position="291"/>
        <end position="363"/>
    </location>
</feature>
<feature type="region of interest" description="Disordered" evidence="5">
    <location>
        <begin position="424"/>
        <end position="522"/>
    </location>
</feature>
<feature type="short sequence motif" description="PDZ-binding" evidence="3">
    <location>
        <begin position="621"/>
        <end position="624"/>
    </location>
</feature>
<feature type="compositionally biased region" description="Basic and acidic residues" evidence="5">
    <location>
        <begin position="1"/>
        <end position="11"/>
    </location>
</feature>
<feature type="compositionally biased region" description="Polar residues" evidence="5">
    <location>
        <begin position="104"/>
        <end position="132"/>
    </location>
</feature>
<feature type="compositionally biased region" description="Low complexity" evidence="5">
    <location>
        <begin position="142"/>
        <end position="153"/>
    </location>
</feature>
<feature type="compositionally biased region" description="Polar residues" evidence="5">
    <location>
        <begin position="165"/>
        <end position="188"/>
    </location>
</feature>
<feature type="compositionally biased region" description="Basic and acidic residues" evidence="5">
    <location>
        <begin position="214"/>
        <end position="229"/>
    </location>
</feature>
<feature type="compositionally biased region" description="Polar residues" evidence="5">
    <location>
        <begin position="291"/>
        <end position="315"/>
    </location>
</feature>
<feature type="compositionally biased region" description="Basic and acidic residues" evidence="5">
    <location>
        <begin position="329"/>
        <end position="339"/>
    </location>
</feature>
<feature type="compositionally biased region" description="Polar residues" evidence="5">
    <location>
        <begin position="340"/>
        <end position="356"/>
    </location>
</feature>
<feature type="compositionally biased region" description="Gly residues" evidence="5">
    <location>
        <begin position="445"/>
        <end position="454"/>
    </location>
</feature>
<feature type="compositionally biased region" description="Low complexity" evidence="5">
    <location>
        <begin position="455"/>
        <end position="507"/>
    </location>
</feature>
<feature type="modified residue" description="N-acetylmethionine" evidence="15">
    <location>
        <position position="1"/>
    </location>
</feature>
<feature type="modified residue" description="Phosphoserine" evidence="2">
    <location>
        <position position="164"/>
    </location>
</feature>
<feature type="modified residue" description="Phosphoserine" evidence="16">
    <location>
        <position position="195"/>
    </location>
</feature>
<feature type="modified residue" description="Phosphoserine" evidence="16">
    <location>
        <position position="228"/>
    </location>
</feature>
<feature type="modified residue" description="Phosphoserine" evidence="14 16">
    <location>
        <position position="230"/>
    </location>
</feature>
<feature type="modified residue" description="Phosphoserine" evidence="16">
    <location>
        <position position="276"/>
    </location>
</feature>
<feature type="splice variant" id="VSP_055428" description="In isoform 2." evidence="12">
    <original>MEN</original>
    <variation>MLT</variation>
    <location>
        <begin position="1"/>
        <end position="3"/>
    </location>
</feature>
<feature type="splice variant" id="VSP_055429" description="In isoform 2." evidence="12">
    <location>
        <begin position="4"/>
        <end position="144"/>
    </location>
</feature>
<feature type="sequence variant" id="VAR_077826" description="In TOKAS; dbSNP:rs786205133." evidence="10">
    <original>Y</original>
    <variation>C</variation>
    <location>
        <position position="356"/>
    </location>
</feature>
<feature type="sequence variant" id="VAR_077827" description="In TOKAS." evidence="9">
    <original>R</original>
    <variation>C</variation>
    <location>
        <position position="387"/>
    </location>
</feature>
<feature type="sequence variant" id="VAR_077828" description="In TOKAS." evidence="9">
    <original>P</original>
    <variation>R</variation>
    <location>
        <position position="587"/>
    </location>
</feature>
<feature type="sequence variant" id="VAR_074175" evidence="11">
    <original>H</original>
    <variation>P</variation>
    <location>
        <position position="590"/>
    </location>
</feature>
<feature type="sequence variant" id="VAR_077829" description="In TOKAS." evidence="9">
    <original>R</original>
    <variation>C</variation>
    <location>
        <position position="599"/>
    </location>
</feature>
<feature type="sequence conflict" description="In Ref. 2; CAC14228." evidence="13" ref="2">
    <original>S</original>
    <variation>C</variation>
    <location>
        <position position="126"/>
    </location>
</feature>
<feature type="sequence conflict" description="In Ref. 2; CAC14228." evidence="13" ref="2">
    <original>D</original>
    <variation>N</variation>
    <location>
        <position position="134"/>
    </location>
</feature>
<feature type="sequence conflict" description="In Ref. 2; CAC14228." evidence="13" ref="2">
    <original>NR</original>
    <variation>YS</variation>
    <location>
        <begin position="144"/>
        <end position="145"/>
    </location>
</feature>
<feature type="sequence conflict" description="In Ref. 3; BAA91632." evidence="13" ref="3">
    <original>Y</original>
    <variation>H</variation>
    <location>
        <position position="418"/>
    </location>
</feature>
<feature type="helix" evidence="17">
    <location>
        <begin position="550"/>
        <end position="554"/>
    </location>
</feature>
<feature type="strand" evidence="17">
    <location>
        <begin position="558"/>
        <end position="560"/>
    </location>
</feature>
<feature type="helix" evidence="18">
    <location>
        <begin position="563"/>
        <end position="567"/>
    </location>
</feature>
<feature type="turn" evidence="17">
    <location>
        <begin position="571"/>
        <end position="574"/>
    </location>
</feature>
<feature type="strand" evidence="17">
    <location>
        <begin position="582"/>
        <end position="585"/>
    </location>
</feature>
<feature type="strand" evidence="17">
    <location>
        <begin position="591"/>
        <end position="593"/>
    </location>
</feature>
<feature type="helix" evidence="17">
    <location>
        <begin position="594"/>
        <end position="601"/>
    </location>
</feature>
<feature type="turn" evidence="17">
    <location>
        <begin position="608"/>
        <end position="610"/>
    </location>
</feature>
<name>RNF12_HUMAN</name>
<protein>
    <recommendedName>
        <fullName>E3 ubiquitin-protein ligase RLIM</fullName>
        <ecNumber>2.3.2.27</ecNumber>
    </recommendedName>
    <alternativeName>
        <fullName>LIM domain-interacting RING finger protein</fullName>
    </alternativeName>
    <alternativeName>
        <fullName>RING finger LIM domain-binding protein</fullName>
        <shortName>R-LIM</shortName>
    </alternativeName>
    <alternativeName>
        <fullName>RING finger protein 12</fullName>
    </alternativeName>
    <alternativeName>
        <fullName evidence="13">RING-type E3 ubiquitin transferase RLIM</fullName>
    </alternativeName>
    <alternativeName>
        <fullName>Renal carcinoma antigen NY-REN-43</fullName>
    </alternativeName>
</protein>
<proteinExistence type="evidence at protein level"/>
<comment type="function">
    <text evidence="7 8">E3 ubiquitin-protein ligase. Acts as a negative coregulator for LIM homeodomain transcription factors by mediating the ubiquitination and subsequent degradation of LIM cofactors LDB1 and LDB2 and by mediating the recruitment the SIN3a/histone deacetylase corepressor complex. Ubiquitination and degradation of LIM cofactors LDB1 and LDB2 allows DNA-bound LIM homeodomain transcription factors to interact with other protein partners such as RLIM. Plays a role in telomere length-mediated growth suppression by mediating the ubiquitination and degradation of TERF1. By targeting ZFP42 for degradation, acts as an activator of random inactivation of X chromosome in the embryo, a stochastic process in which one X chromosome is inactivated to minimize sex-related dosage differences of X-encoded genes in somatic cells of female placental mammals.</text>
</comment>
<comment type="catalytic activity">
    <reaction>
        <text>S-ubiquitinyl-[E2 ubiquitin-conjugating enzyme]-L-cysteine + [acceptor protein]-L-lysine = [E2 ubiquitin-conjugating enzyme]-L-cysteine + N(6)-ubiquitinyl-[acceptor protein]-L-lysine.</text>
        <dbReference type="EC" id="2.3.2.27"/>
    </reaction>
</comment>
<comment type="pathway">
    <text>Protein modification; protein ubiquitination.</text>
</comment>
<comment type="subunit">
    <text evidence="1 6 7">Interacts with LIM/homeobox factors such as LHX3. Interacts with LDB1, LDB2 and SIN3A (By similarity). Interacts with LIMK1 (By similarity). Interacts (via N-terminus) with TERF1. Interacts (via C-terminus) with ESR1.</text>
</comment>
<comment type="subcellular location">
    <subcellularLocation>
        <location evidence="6 7">Nucleus</location>
    </subcellularLocation>
</comment>
<comment type="alternative products">
    <event type="alternative splicing"/>
    <isoform>
        <id>Q9NVW2-1</id>
        <name>1</name>
        <sequence type="displayed"/>
    </isoform>
    <isoform>
        <id>Q9NVW2-2</id>
        <name>2</name>
        <sequence type="described" ref="VSP_055428 VSP_055429"/>
    </isoform>
</comment>
<comment type="tissue specificity">
    <text>Expressed in many tissues.</text>
</comment>
<comment type="disease" evidence="9 10">
    <disease id="DI-04795">
        <name>Tonne-Kalscheuer syndrome</name>
        <acronym>TOKAS</acronym>
        <description>An X-linked recessive disorder characterized by global developmental delay apparent from early infancy, impaired intellectual development, speech delay, behavioral abnormalities, abnormal gait, dysmorphic facial features, limb anomalies, and urogenital abnormalities with hypogenitalism. A subset of more severely affected males develop congenital diaphragmatic hernia in utero, which may result in perinatal or premature death. Carrier females may have very mild skeletal or hormonal abnormalities.</description>
        <dbReference type="MIM" id="300978"/>
    </disease>
    <text>The disease is caused by variants affecting the gene represented in this entry.</text>
</comment>
<comment type="miscellaneous">
    <text>Acts as a positive coregulator of ESR1-mediated transcription in breast cancer cells.</text>
</comment>
<comment type="similarity">
    <text evidence="13">Belongs to the RNF12 family.</text>
</comment>
<comment type="sequence caution" evidence="13">
    <conflict type="frameshift">
        <sequence resource="EMBL-CDS" id="AAD42875"/>
    </conflict>
</comment>
<dbReference type="EC" id="2.3.2.27"/>
<dbReference type="EMBL" id="AF155109">
    <property type="protein sequence ID" value="AAD42875.1"/>
    <property type="status" value="ALT_FRAME"/>
    <property type="molecule type" value="mRNA"/>
</dbReference>
<dbReference type="EMBL" id="AJ271670">
    <property type="protein sequence ID" value="CAC14228.1"/>
    <property type="molecule type" value="Genomic_DNA"/>
</dbReference>
<dbReference type="EMBL" id="AK001334">
    <property type="protein sequence ID" value="BAA91632.1"/>
    <property type="molecule type" value="mRNA"/>
</dbReference>
<dbReference type="EMBL" id="AK314760">
    <property type="protein sequence ID" value="BAG37298.1"/>
    <property type="molecule type" value="mRNA"/>
</dbReference>
<dbReference type="EMBL" id="AL513007">
    <property type="status" value="NOT_ANNOTATED_CDS"/>
    <property type="molecule type" value="Genomic_DNA"/>
</dbReference>
<dbReference type="EMBL" id="CH471104">
    <property type="protein sequence ID" value="EAW98639.1"/>
    <property type="molecule type" value="Genomic_DNA"/>
</dbReference>
<dbReference type="EMBL" id="CH471104">
    <property type="protein sequence ID" value="EAW98640.1"/>
    <property type="molecule type" value="Genomic_DNA"/>
</dbReference>
<dbReference type="EMBL" id="BC013357">
    <property type="protein sequence ID" value="AAH13357.1"/>
    <property type="molecule type" value="mRNA"/>
</dbReference>
<dbReference type="CCDS" id="CCDS14427.1">
    <molecule id="Q9NVW2-1"/>
</dbReference>
<dbReference type="RefSeq" id="NP_057204.2">
    <molecule id="Q9NVW2-1"/>
    <property type="nucleotide sequence ID" value="NM_016120.3"/>
</dbReference>
<dbReference type="RefSeq" id="NP_899196.1">
    <molecule id="Q9NVW2-1"/>
    <property type="nucleotide sequence ID" value="NM_183353.3"/>
</dbReference>
<dbReference type="PDB" id="6W7Z">
    <property type="method" value="X-ray"/>
    <property type="resolution" value="1.80 A"/>
    <property type="chains" value="B=530-624"/>
</dbReference>
<dbReference type="PDB" id="6W9A">
    <property type="method" value="X-ray"/>
    <property type="resolution" value="2.30 A"/>
    <property type="chains" value="B/D=530-623"/>
</dbReference>
<dbReference type="PDB" id="6W9D">
    <property type="method" value="X-ray"/>
    <property type="resolution" value="3.19 A"/>
    <property type="chains" value="B/E/H=530-623"/>
</dbReference>
<dbReference type="PDBsum" id="6W7Z"/>
<dbReference type="PDBsum" id="6W9A"/>
<dbReference type="PDBsum" id="6W9D"/>
<dbReference type="SMR" id="Q9NVW2"/>
<dbReference type="BioGRID" id="119319">
    <property type="interactions" value="424"/>
</dbReference>
<dbReference type="FunCoup" id="Q9NVW2">
    <property type="interactions" value="2588"/>
</dbReference>
<dbReference type="IntAct" id="Q9NVW2">
    <property type="interactions" value="61"/>
</dbReference>
<dbReference type="MINT" id="Q9NVW2"/>
<dbReference type="STRING" id="9606.ENSP00000328059"/>
<dbReference type="iPTMnet" id="Q9NVW2"/>
<dbReference type="MetOSite" id="Q9NVW2"/>
<dbReference type="PhosphoSitePlus" id="Q9NVW2"/>
<dbReference type="BioMuta" id="RLIM"/>
<dbReference type="DMDM" id="143811451"/>
<dbReference type="jPOST" id="Q9NVW2"/>
<dbReference type="MassIVE" id="Q9NVW2"/>
<dbReference type="PaxDb" id="9606-ENSP00000328059"/>
<dbReference type="PeptideAtlas" id="Q9NVW2"/>
<dbReference type="ProteomicsDB" id="82872">
    <molecule id="Q9NVW2-1"/>
</dbReference>
<dbReference type="Pumba" id="Q9NVW2"/>
<dbReference type="Antibodypedia" id="13786">
    <property type="antibodies" value="194 antibodies from 25 providers"/>
</dbReference>
<dbReference type="DNASU" id="51132"/>
<dbReference type="Ensembl" id="ENST00000332687.11">
    <molecule id="Q9NVW2-1"/>
    <property type="protein sequence ID" value="ENSP00000328059.6"/>
    <property type="gene ID" value="ENSG00000131263.13"/>
</dbReference>
<dbReference type="Ensembl" id="ENST00000349225.2">
    <molecule id="Q9NVW2-1"/>
    <property type="protein sequence ID" value="ENSP00000253571.3"/>
    <property type="gene ID" value="ENSG00000131263.13"/>
</dbReference>
<dbReference type="GeneID" id="51132"/>
<dbReference type="KEGG" id="hsa:51132"/>
<dbReference type="MANE-Select" id="ENST00000332687.11">
    <property type="protein sequence ID" value="ENSP00000328059.6"/>
    <property type="RefSeq nucleotide sequence ID" value="NM_016120.4"/>
    <property type="RefSeq protein sequence ID" value="NP_057204.2"/>
</dbReference>
<dbReference type="UCSC" id="uc004ebu.4">
    <molecule id="Q9NVW2-1"/>
    <property type="organism name" value="human"/>
</dbReference>
<dbReference type="AGR" id="HGNC:13429"/>
<dbReference type="CTD" id="51132"/>
<dbReference type="DisGeNET" id="51132"/>
<dbReference type="GeneCards" id="RLIM"/>
<dbReference type="HGNC" id="HGNC:13429">
    <property type="gene designation" value="RLIM"/>
</dbReference>
<dbReference type="HPA" id="ENSG00000131263">
    <property type="expression patterns" value="Tissue enhanced (bone)"/>
</dbReference>
<dbReference type="MalaCards" id="RLIM"/>
<dbReference type="MIM" id="300379">
    <property type="type" value="gene"/>
</dbReference>
<dbReference type="MIM" id="300978">
    <property type="type" value="phenotype"/>
</dbReference>
<dbReference type="neXtProt" id="NX_Q9NVW2"/>
<dbReference type="OpenTargets" id="ENSG00000131263"/>
<dbReference type="Orphanet" id="528084">
    <property type="disease" value="Non-specific syndromic intellectual disability"/>
</dbReference>
<dbReference type="PharmGKB" id="PA164725373"/>
<dbReference type="VEuPathDB" id="HostDB:ENSG00000131263"/>
<dbReference type="eggNOG" id="KOG0800">
    <property type="taxonomic scope" value="Eukaryota"/>
</dbReference>
<dbReference type="GeneTree" id="ENSGT00940000155753"/>
<dbReference type="HOGENOM" id="CLU_025933_1_0_1"/>
<dbReference type="InParanoid" id="Q9NVW2"/>
<dbReference type="OMA" id="YEGGHEG"/>
<dbReference type="OrthoDB" id="8062037at2759"/>
<dbReference type="PAN-GO" id="Q9NVW2">
    <property type="GO annotations" value="7 GO annotations based on evolutionary models"/>
</dbReference>
<dbReference type="PhylomeDB" id="Q9NVW2"/>
<dbReference type="TreeFam" id="TF325756"/>
<dbReference type="PathwayCommons" id="Q9NVW2"/>
<dbReference type="Reactome" id="R-HSA-983168">
    <property type="pathway name" value="Antigen processing: Ubiquitination &amp; Proteasome degradation"/>
</dbReference>
<dbReference type="SignaLink" id="Q9NVW2"/>
<dbReference type="SIGNOR" id="Q9NVW2"/>
<dbReference type="UniPathway" id="UPA00143"/>
<dbReference type="BioGRID-ORCS" id="51132">
    <property type="hits" value="60 hits in 820 CRISPR screens"/>
</dbReference>
<dbReference type="ChiTaRS" id="RLIM">
    <property type="organism name" value="human"/>
</dbReference>
<dbReference type="GeneWiki" id="RNF12"/>
<dbReference type="GenomeRNAi" id="51132"/>
<dbReference type="Pharos" id="Q9NVW2">
    <property type="development level" value="Tbio"/>
</dbReference>
<dbReference type="PRO" id="PR:Q9NVW2"/>
<dbReference type="Proteomes" id="UP000005640">
    <property type="component" value="Chromosome X"/>
</dbReference>
<dbReference type="RNAct" id="Q9NVW2">
    <property type="molecule type" value="protein"/>
</dbReference>
<dbReference type="Bgee" id="ENSG00000131263">
    <property type="expression patterns" value="Expressed in middle temporal gyrus and 193 other cell types or tissues"/>
</dbReference>
<dbReference type="GO" id="GO:0005829">
    <property type="term" value="C:cytosol"/>
    <property type="evidence" value="ECO:0000314"/>
    <property type="project" value="HPA"/>
</dbReference>
<dbReference type="GO" id="GO:0005654">
    <property type="term" value="C:nucleoplasm"/>
    <property type="evidence" value="ECO:0000314"/>
    <property type="project" value="HPA"/>
</dbReference>
<dbReference type="GO" id="GO:0005634">
    <property type="term" value="C:nucleus"/>
    <property type="evidence" value="ECO:0000250"/>
    <property type="project" value="UniProtKB"/>
</dbReference>
<dbReference type="GO" id="GO:0017053">
    <property type="term" value="C:transcription repressor complex"/>
    <property type="evidence" value="ECO:0000303"/>
    <property type="project" value="UniProtKB"/>
</dbReference>
<dbReference type="GO" id="GO:0003714">
    <property type="term" value="F:transcription corepressor activity"/>
    <property type="evidence" value="ECO:0000303"/>
    <property type="project" value="UniProtKB"/>
</dbReference>
<dbReference type="GO" id="GO:0061630">
    <property type="term" value="F:ubiquitin protein ligase activity"/>
    <property type="evidence" value="ECO:0000318"/>
    <property type="project" value="GO_Central"/>
</dbReference>
<dbReference type="GO" id="GO:0004842">
    <property type="term" value="F:ubiquitin-protein transferase activity"/>
    <property type="evidence" value="ECO:0000250"/>
    <property type="project" value="UniProtKB"/>
</dbReference>
<dbReference type="GO" id="GO:0008270">
    <property type="term" value="F:zinc ion binding"/>
    <property type="evidence" value="ECO:0007669"/>
    <property type="project" value="UniProtKB-KW"/>
</dbReference>
<dbReference type="GO" id="GO:0045892">
    <property type="term" value="P:negative regulation of DNA-templated transcription"/>
    <property type="evidence" value="ECO:0000303"/>
    <property type="project" value="UniProtKB"/>
</dbReference>
<dbReference type="GO" id="GO:0000122">
    <property type="term" value="P:negative regulation of transcription by RNA polymerase II"/>
    <property type="evidence" value="ECO:0007669"/>
    <property type="project" value="Ensembl"/>
</dbReference>
<dbReference type="GO" id="GO:0016567">
    <property type="term" value="P:protein ubiquitination"/>
    <property type="evidence" value="ECO:0000250"/>
    <property type="project" value="UniProtKB"/>
</dbReference>
<dbReference type="GO" id="GO:0060816">
    <property type="term" value="P:random inactivation of X chromosome"/>
    <property type="evidence" value="ECO:0000314"/>
    <property type="project" value="UniProtKB"/>
</dbReference>
<dbReference type="GO" id="GO:0006511">
    <property type="term" value="P:ubiquitin-dependent protein catabolic process"/>
    <property type="evidence" value="ECO:0000250"/>
    <property type="project" value="UniProtKB"/>
</dbReference>
<dbReference type="CDD" id="cd16674">
    <property type="entry name" value="RING-H2_RNF12"/>
    <property type="match status" value="1"/>
</dbReference>
<dbReference type="FunFam" id="3.30.40.10:FF:000054">
    <property type="entry name" value="E3 ubiquitin-protein ligase RLIM isoform X1"/>
    <property type="match status" value="1"/>
</dbReference>
<dbReference type="Gene3D" id="3.30.40.10">
    <property type="entry name" value="Zinc/RING finger domain, C3HC4 (zinc finger)"/>
    <property type="match status" value="1"/>
</dbReference>
<dbReference type="InterPro" id="IPR051834">
    <property type="entry name" value="RING_finger_E3_ligase"/>
</dbReference>
<dbReference type="InterPro" id="IPR001841">
    <property type="entry name" value="Znf_RING"/>
</dbReference>
<dbReference type="InterPro" id="IPR013083">
    <property type="entry name" value="Znf_RING/FYVE/PHD"/>
</dbReference>
<dbReference type="PANTHER" id="PTHR45931:SF4">
    <property type="entry name" value="E3 UBIQUITIN-PROTEIN LIGASE RLIM"/>
    <property type="match status" value="1"/>
</dbReference>
<dbReference type="PANTHER" id="PTHR45931">
    <property type="entry name" value="SI:CH211-59O9.10"/>
    <property type="match status" value="1"/>
</dbReference>
<dbReference type="Pfam" id="PF13639">
    <property type="entry name" value="zf-RING_2"/>
    <property type="match status" value="1"/>
</dbReference>
<dbReference type="SMART" id="SM00184">
    <property type="entry name" value="RING"/>
    <property type="match status" value="1"/>
</dbReference>
<dbReference type="SUPFAM" id="SSF57850">
    <property type="entry name" value="RING/U-box"/>
    <property type="match status" value="1"/>
</dbReference>
<dbReference type="PROSITE" id="PS50089">
    <property type="entry name" value="ZF_RING_2"/>
    <property type="match status" value="1"/>
</dbReference>
<evidence type="ECO:0000250" key="1"/>
<evidence type="ECO:0000250" key="2">
    <source>
        <dbReference type="UniProtKB" id="Q9WTV7"/>
    </source>
</evidence>
<evidence type="ECO:0000255" key="3"/>
<evidence type="ECO:0000255" key="4">
    <source>
        <dbReference type="PROSITE-ProRule" id="PRU00175"/>
    </source>
</evidence>
<evidence type="ECO:0000256" key="5">
    <source>
        <dbReference type="SAM" id="MobiDB-lite"/>
    </source>
</evidence>
<evidence type="ECO:0000269" key="6">
    <source>
    </source>
</evidence>
<evidence type="ECO:0000269" key="7">
    <source>
    </source>
</evidence>
<evidence type="ECO:0000269" key="8">
    <source>
    </source>
</evidence>
<evidence type="ECO:0000269" key="9">
    <source>
    </source>
</evidence>
<evidence type="ECO:0000269" key="10">
    <source>
    </source>
</evidence>
<evidence type="ECO:0000269" key="11">
    <source>
    </source>
</evidence>
<evidence type="ECO:0000303" key="12">
    <source>
    </source>
</evidence>
<evidence type="ECO:0000305" key="13"/>
<evidence type="ECO:0007744" key="14">
    <source>
    </source>
</evidence>
<evidence type="ECO:0007744" key="15">
    <source>
    </source>
</evidence>
<evidence type="ECO:0007744" key="16">
    <source>
    </source>
</evidence>
<evidence type="ECO:0007829" key="17">
    <source>
        <dbReference type="PDB" id="6W7Z"/>
    </source>
</evidence>
<evidence type="ECO:0007829" key="18">
    <source>
        <dbReference type="PDB" id="6W9A"/>
    </source>
</evidence>
<accession>Q9NVW2</accession>
<accession>B2RBQ1</accession>
<accession>D3DTE0</accession>
<accession>Q96D38</accession>
<accession>Q9Y598</accession>
<organism>
    <name type="scientific">Homo sapiens</name>
    <name type="common">Human</name>
    <dbReference type="NCBI Taxonomy" id="9606"/>
    <lineage>
        <taxon>Eukaryota</taxon>
        <taxon>Metazoa</taxon>
        <taxon>Chordata</taxon>
        <taxon>Craniata</taxon>
        <taxon>Vertebrata</taxon>
        <taxon>Euteleostomi</taxon>
        <taxon>Mammalia</taxon>
        <taxon>Eutheria</taxon>
        <taxon>Euarchontoglires</taxon>
        <taxon>Primates</taxon>
        <taxon>Haplorrhini</taxon>
        <taxon>Catarrhini</taxon>
        <taxon>Hominidae</taxon>
        <taxon>Homo</taxon>
    </lineage>
</organism>
<reference key="1">
    <citation type="journal article" date="1999" name="Int. J. Cancer">
        <title>Antigens recognized by autologous antibody in patients with renal-cell carcinoma.</title>
        <authorList>
            <person name="Scanlan M.J."/>
            <person name="Gordan J.D."/>
            <person name="Williamson B."/>
            <person name="Stockert E."/>
            <person name="Bander N.H."/>
            <person name="Jongeneel C.V."/>
            <person name="Gure A.O."/>
            <person name="Jaeger D."/>
            <person name="Jaeger E."/>
            <person name="Knuth A."/>
            <person name="Chen Y.-T."/>
            <person name="Old L.J."/>
        </authorList>
    </citation>
    <scope>NUCLEOTIDE SEQUENCE [MRNA] (ISOFORM 1)</scope>
    <scope>IDENTIFICATION AS A RENAL CANCER ANTIGEN</scope>
    <source>
        <tissue>Renal cell carcinoma</tissue>
    </source>
</reference>
<reference key="2">
    <citation type="journal article" date="2000" name="Genomics">
        <title>Functional characterization of the gene encoding RLIM, the corepressor of LIM homeodomain transcription factors.</title>
        <authorList>
            <person name="Ostendorff H.P."/>
            <person name="Bossenz M."/>
            <person name="Mincheva A."/>
            <person name="Copeland N.G."/>
            <person name="Gilbert D.J."/>
            <person name="Jenkins N.A."/>
            <person name="Lichter P."/>
            <person name="Bach I."/>
        </authorList>
    </citation>
    <scope>NUCLEOTIDE SEQUENCE [GENOMIC DNA]</scope>
</reference>
<reference key="3">
    <citation type="journal article" date="2004" name="Nat. Genet.">
        <title>Complete sequencing and characterization of 21,243 full-length human cDNAs.</title>
        <authorList>
            <person name="Ota T."/>
            <person name="Suzuki Y."/>
            <person name="Nishikawa T."/>
            <person name="Otsuki T."/>
            <person name="Sugiyama T."/>
            <person name="Irie R."/>
            <person name="Wakamatsu A."/>
            <person name="Hayashi K."/>
            <person name="Sato H."/>
            <person name="Nagai K."/>
            <person name="Kimura K."/>
            <person name="Makita H."/>
            <person name="Sekine M."/>
            <person name="Obayashi M."/>
            <person name="Nishi T."/>
            <person name="Shibahara T."/>
            <person name="Tanaka T."/>
            <person name="Ishii S."/>
            <person name="Yamamoto J."/>
            <person name="Saito K."/>
            <person name="Kawai Y."/>
            <person name="Isono Y."/>
            <person name="Nakamura Y."/>
            <person name="Nagahari K."/>
            <person name="Murakami K."/>
            <person name="Yasuda T."/>
            <person name="Iwayanagi T."/>
            <person name="Wagatsuma M."/>
            <person name="Shiratori A."/>
            <person name="Sudo H."/>
            <person name="Hosoiri T."/>
            <person name="Kaku Y."/>
            <person name="Kodaira H."/>
            <person name="Kondo H."/>
            <person name="Sugawara M."/>
            <person name="Takahashi M."/>
            <person name="Kanda K."/>
            <person name="Yokoi T."/>
            <person name="Furuya T."/>
            <person name="Kikkawa E."/>
            <person name="Omura Y."/>
            <person name="Abe K."/>
            <person name="Kamihara K."/>
            <person name="Katsuta N."/>
            <person name="Sato K."/>
            <person name="Tanikawa M."/>
            <person name="Yamazaki M."/>
            <person name="Ninomiya K."/>
            <person name="Ishibashi T."/>
            <person name="Yamashita H."/>
            <person name="Murakawa K."/>
            <person name="Fujimori K."/>
            <person name="Tanai H."/>
            <person name="Kimata M."/>
            <person name="Watanabe M."/>
            <person name="Hiraoka S."/>
            <person name="Chiba Y."/>
            <person name="Ishida S."/>
            <person name="Ono Y."/>
            <person name="Takiguchi S."/>
            <person name="Watanabe S."/>
            <person name="Yosida M."/>
            <person name="Hotuta T."/>
            <person name="Kusano J."/>
            <person name="Kanehori K."/>
            <person name="Takahashi-Fujii A."/>
            <person name="Hara H."/>
            <person name="Tanase T.-O."/>
            <person name="Nomura Y."/>
            <person name="Togiya S."/>
            <person name="Komai F."/>
            <person name="Hara R."/>
            <person name="Takeuchi K."/>
            <person name="Arita M."/>
            <person name="Imose N."/>
            <person name="Musashino K."/>
            <person name="Yuuki H."/>
            <person name="Oshima A."/>
            <person name="Sasaki N."/>
            <person name="Aotsuka S."/>
            <person name="Yoshikawa Y."/>
            <person name="Matsunawa H."/>
            <person name="Ichihara T."/>
            <person name="Shiohata N."/>
            <person name="Sano S."/>
            <person name="Moriya S."/>
            <person name="Momiyama H."/>
            <person name="Satoh N."/>
            <person name="Takami S."/>
            <person name="Terashima Y."/>
            <person name="Suzuki O."/>
            <person name="Nakagawa S."/>
            <person name="Senoh A."/>
            <person name="Mizoguchi H."/>
            <person name="Goto Y."/>
            <person name="Shimizu F."/>
            <person name="Wakebe H."/>
            <person name="Hishigaki H."/>
            <person name="Watanabe T."/>
            <person name="Sugiyama A."/>
            <person name="Takemoto M."/>
            <person name="Kawakami B."/>
            <person name="Yamazaki M."/>
            <person name="Watanabe K."/>
            <person name="Kumagai A."/>
            <person name="Itakura S."/>
            <person name="Fukuzumi Y."/>
            <person name="Fujimori Y."/>
            <person name="Komiyama M."/>
            <person name="Tashiro H."/>
            <person name="Tanigami A."/>
            <person name="Fujiwara T."/>
            <person name="Ono T."/>
            <person name="Yamada K."/>
            <person name="Fujii Y."/>
            <person name="Ozaki K."/>
            <person name="Hirao M."/>
            <person name="Ohmori Y."/>
            <person name="Kawabata A."/>
            <person name="Hikiji T."/>
            <person name="Kobatake N."/>
            <person name="Inagaki H."/>
            <person name="Ikema Y."/>
            <person name="Okamoto S."/>
            <person name="Okitani R."/>
            <person name="Kawakami T."/>
            <person name="Noguchi S."/>
            <person name="Itoh T."/>
            <person name="Shigeta K."/>
            <person name="Senba T."/>
            <person name="Matsumura K."/>
            <person name="Nakajima Y."/>
            <person name="Mizuno T."/>
            <person name="Morinaga M."/>
            <person name="Sasaki M."/>
            <person name="Togashi T."/>
            <person name="Oyama M."/>
            <person name="Hata H."/>
            <person name="Watanabe M."/>
            <person name="Komatsu T."/>
            <person name="Mizushima-Sugano J."/>
            <person name="Satoh T."/>
            <person name="Shirai Y."/>
            <person name="Takahashi Y."/>
            <person name="Nakagawa K."/>
            <person name="Okumura K."/>
            <person name="Nagase T."/>
            <person name="Nomura N."/>
            <person name="Kikuchi H."/>
            <person name="Masuho Y."/>
            <person name="Yamashita R."/>
            <person name="Nakai K."/>
            <person name="Yada T."/>
            <person name="Nakamura Y."/>
            <person name="Ohara O."/>
            <person name="Isogai T."/>
            <person name="Sugano S."/>
        </authorList>
    </citation>
    <scope>NUCLEOTIDE SEQUENCE [LARGE SCALE MRNA] (ISOFORMS 1 AND 2)</scope>
    <source>
        <tissue>Teratocarcinoma</tissue>
        <tissue>Thymus</tissue>
    </source>
</reference>
<reference key="4">
    <citation type="journal article" date="2005" name="Nature">
        <title>The DNA sequence of the human X chromosome.</title>
        <authorList>
            <person name="Ross M.T."/>
            <person name="Grafham D.V."/>
            <person name="Coffey A.J."/>
            <person name="Scherer S."/>
            <person name="McLay K."/>
            <person name="Muzny D."/>
            <person name="Platzer M."/>
            <person name="Howell G.R."/>
            <person name="Burrows C."/>
            <person name="Bird C.P."/>
            <person name="Frankish A."/>
            <person name="Lovell F.L."/>
            <person name="Howe K.L."/>
            <person name="Ashurst J.L."/>
            <person name="Fulton R.S."/>
            <person name="Sudbrak R."/>
            <person name="Wen G."/>
            <person name="Jones M.C."/>
            <person name="Hurles M.E."/>
            <person name="Andrews T.D."/>
            <person name="Scott C.E."/>
            <person name="Searle S."/>
            <person name="Ramser J."/>
            <person name="Whittaker A."/>
            <person name="Deadman R."/>
            <person name="Carter N.P."/>
            <person name="Hunt S.E."/>
            <person name="Chen R."/>
            <person name="Cree A."/>
            <person name="Gunaratne P."/>
            <person name="Havlak P."/>
            <person name="Hodgson A."/>
            <person name="Metzker M.L."/>
            <person name="Richards S."/>
            <person name="Scott G."/>
            <person name="Steffen D."/>
            <person name="Sodergren E."/>
            <person name="Wheeler D.A."/>
            <person name="Worley K.C."/>
            <person name="Ainscough R."/>
            <person name="Ambrose K.D."/>
            <person name="Ansari-Lari M.A."/>
            <person name="Aradhya S."/>
            <person name="Ashwell R.I."/>
            <person name="Babbage A.K."/>
            <person name="Bagguley C.L."/>
            <person name="Ballabio A."/>
            <person name="Banerjee R."/>
            <person name="Barker G.E."/>
            <person name="Barlow K.F."/>
            <person name="Barrett I.P."/>
            <person name="Bates K.N."/>
            <person name="Beare D.M."/>
            <person name="Beasley H."/>
            <person name="Beasley O."/>
            <person name="Beck A."/>
            <person name="Bethel G."/>
            <person name="Blechschmidt K."/>
            <person name="Brady N."/>
            <person name="Bray-Allen S."/>
            <person name="Bridgeman A.M."/>
            <person name="Brown A.J."/>
            <person name="Brown M.J."/>
            <person name="Bonnin D."/>
            <person name="Bruford E.A."/>
            <person name="Buhay C."/>
            <person name="Burch P."/>
            <person name="Burford D."/>
            <person name="Burgess J."/>
            <person name="Burrill W."/>
            <person name="Burton J."/>
            <person name="Bye J.M."/>
            <person name="Carder C."/>
            <person name="Carrel L."/>
            <person name="Chako J."/>
            <person name="Chapman J.C."/>
            <person name="Chavez D."/>
            <person name="Chen E."/>
            <person name="Chen G."/>
            <person name="Chen Y."/>
            <person name="Chen Z."/>
            <person name="Chinault C."/>
            <person name="Ciccodicola A."/>
            <person name="Clark S.Y."/>
            <person name="Clarke G."/>
            <person name="Clee C.M."/>
            <person name="Clegg S."/>
            <person name="Clerc-Blankenburg K."/>
            <person name="Clifford K."/>
            <person name="Cobley V."/>
            <person name="Cole C.G."/>
            <person name="Conquer J.S."/>
            <person name="Corby N."/>
            <person name="Connor R.E."/>
            <person name="David R."/>
            <person name="Davies J."/>
            <person name="Davis C."/>
            <person name="Davis J."/>
            <person name="Delgado O."/>
            <person name="Deshazo D."/>
            <person name="Dhami P."/>
            <person name="Ding Y."/>
            <person name="Dinh H."/>
            <person name="Dodsworth S."/>
            <person name="Draper H."/>
            <person name="Dugan-Rocha S."/>
            <person name="Dunham A."/>
            <person name="Dunn M."/>
            <person name="Durbin K.J."/>
            <person name="Dutta I."/>
            <person name="Eades T."/>
            <person name="Ellwood M."/>
            <person name="Emery-Cohen A."/>
            <person name="Errington H."/>
            <person name="Evans K.L."/>
            <person name="Faulkner L."/>
            <person name="Francis F."/>
            <person name="Frankland J."/>
            <person name="Fraser A.E."/>
            <person name="Galgoczy P."/>
            <person name="Gilbert J."/>
            <person name="Gill R."/>
            <person name="Gloeckner G."/>
            <person name="Gregory S.G."/>
            <person name="Gribble S."/>
            <person name="Griffiths C."/>
            <person name="Grocock R."/>
            <person name="Gu Y."/>
            <person name="Gwilliam R."/>
            <person name="Hamilton C."/>
            <person name="Hart E.A."/>
            <person name="Hawes A."/>
            <person name="Heath P.D."/>
            <person name="Heitmann K."/>
            <person name="Hennig S."/>
            <person name="Hernandez J."/>
            <person name="Hinzmann B."/>
            <person name="Ho S."/>
            <person name="Hoffs M."/>
            <person name="Howden P.J."/>
            <person name="Huckle E.J."/>
            <person name="Hume J."/>
            <person name="Hunt P.J."/>
            <person name="Hunt A.R."/>
            <person name="Isherwood J."/>
            <person name="Jacob L."/>
            <person name="Johnson D."/>
            <person name="Jones S."/>
            <person name="de Jong P.J."/>
            <person name="Joseph S.S."/>
            <person name="Keenan S."/>
            <person name="Kelly S."/>
            <person name="Kershaw J.K."/>
            <person name="Khan Z."/>
            <person name="Kioschis P."/>
            <person name="Klages S."/>
            <person name="Knights A.J."/>
            <person name="Kosiura A."/>
            <person name="Kovar-Smith C."/>
            <person name="Laird G.K."/>
            <person name="Langford C."/>
            <person name="Lawlor S."/>
            <person name="Leversha M."/>
            <person name="Lewis L."/>
            <person name="Liu W."/>
            <person name="Lloyd C."/>
            <person name="Lloyd D.M."/>
            <person name="Loulseged H."/>
            <person name="Loveland J.E."/>
            <person name="Lovell J.D."/>
            <person name="Lozado R."/>
            <person name="Lu J."/>
            <person name="Lyne R."/>
            <person name="Ma J."/>
            <person name="Maheshwari M."/>
            <person name="Matthews L.H."/>
            <person name="McDowall J."/>
            <person name="McLaren S."/>
            <person name="McMurray A."/>
            <person name="Meidl P."/>
            <person name="Meitinger T."/>
            <person name="Milne S."/>
            <person name="Miner G."/>
            <person name="Mistry S.L."/>
            <person name="Morgan M."/>
            <person name="Morris S."/>
            <person name="Mueller I."/>
            <person name="Mullikin J.C."/>
            <person name="Nguyen N."/>
            <person name="Nordsiek G."/>
            <person name="Nyakatura G."/>
            <person name="O'dell C.N."/>
            <person name="Okwuonu G."/>
            <person name="Palmer S."/>
            <person name="Pandian R."/>
            <person name="Parker D."/>
            <person name="Parrish J."/>
            <person name="Pasternak S."/>
            <person name="Patel D."/>
            <person name="Pearce A.V."/>
            <person name="Pearson D.M."/>
            <person name="Pelan S.E."/>
            <person name="Perez L."/>
            <person name="Porter K.M."/>
            <person name="Ramsey Y."/>
            <person name="Reichwald K."/>
            <person name="Rhodes S."/>
            <person name="Ridler K.A."/>
            <person name="Schlessinger D."/>
            <person name="Schueler M.G."/>
            <person name="Sehra H.K."/>
            <person name="Shaw-Smith C."/>
            <person name="Shen H."/>
            <person name="Sheridan E.M."/>
            <person name="Shownkeen R."/>
            <person name="Skuce C.D."/>
            <person name="Smith M.L."/>
            <person name="Sotheran E.C."/>
            <person name="Steingruber H.E."/>
            <person name="Steward C.A."/>
            <person name="Storey R."/>
            <person name="Swann R.M."/>
            <person name="Swarbreck D."/>
            <person name="Tabor P.E."/>
            <person name="Taudien S."/>
            <person name="Taylor T."/>
            <person name="Teague B."/>
            <person name="Thomas K."/>
            <person name="Thorpe A."/>
            <person name="Timms K."/>
            <person name="Tracey A."/>
            <person name="Trevanion S."/>
            <person name="Tromans A.C."/>
            <person name="d'Urso M."/>
            <person name="Verduzco D."/>
            <person name="Villasana D."/>
            <person name="Waldron L."/>
            <person name="Wall M."/>
            <person name="Wang Q."/>
            <person name="Warren J."/>
            <person name="Warry G.L."/>
            <person name="Wei X."/>
            <person name="West A."/>
            <person name="Whitehead S.L."/>
            <person name="Whiteley M.N."/>
            <person name="Wilkinson J.E."/>
            <person name="Willey D.L."/>
            <person name="Williams G."/>
            <person name="Williams L."/>
            <person name="Williamson A."/>
            <person name="Williamson H."/>
            <person name="Wilming L."/>
            <person name="Woodmansey R.L."/>
            <person name="Wray P.W."/>
            <person name="Yen J."/>
            <person name="Zhang J."/>
            <person name="Zhou J."/>
            <person name="Zoghbi H."/>
            <person name="Zorilla S."/>
            <person name="Buck D."/>
            <person name="Reinhardt R."/>
            <person name="Poustka A."/>
            <person name="Rosenthal A."/>
            <person name="Lehrach H."/>
            <person name="Meindl A."/>
            <person name="Minx P.J."/>
            <person name="Hillier L.W."/>
            <person name="Willard H.F."/>
            <person name="Wilson R.K."/>
            <person name="Waterston R.H."/>
            <person name="Rice C.M."/>
            <person name="Vaudin M."/>
            <person name="Coulson A."/>
            <person name="Nelson D.L."/>
            <person name="Weinstock G."/>
            <person name="Sulston J.E."/>
            <person name="Durbin R.M."/>
            <person name="Hubbard T."/>
            <person name="Gibbs R.A."/>
            <person name="Beck S."/>
            <person name="Rogers J."/>
            <person name="Bentley D.R."/>
        </authorList>
    </citation>
    <scope>NUCLEOTIDE SEQUENCE [LARGE SCALE GENOMIC DNA]</scope>
</reference>
<reference key="5">
    <citation type="submission" date="2005-09" db="EMBL/GenBank/DDBJ databases">
        <authorList>
            <person name="Mural R.J."/>
            <person name="Istrail S."/>
            <person name="Sutton G.G."/>
            <person name="Florea L."/>
            <person name="Halpern A.L."/>
            <person name="Mobarry C.M."/>
            <person name="Lippert R."/>
            <person name="Walenz B."/>
            <person name="Shatkay H."/>
            <person name="Dew I."/>
            <person name="Miller J.R."/>
            <person name="Flanigan M.J."/>
            <person name="Edwards N.J."/>
            <person name="Bolanos R."/>
            <person name="Fasulo D."/>
            <person name="Halldorsson B.V."/>
            <person name="Hannenhalli S."/>
            <person name="Turner R."/>
            <person name="Yooseph S."/>
            <person name="Lu F."/>
            <person name="Nusskern D.R."/>
            <person name="Shue B.C."/>
            <person name="Zheng X.H."/>
            <person name="Zhong F."/>
            <person name="Delcher A.L."/>
            <person name="Huson D.H."/>
            <person name="Kravitz S.A."/>
            <person name="Mouchard L."/>
            <person name="Reinert K."/>
            <person name="Remington K.A."/>
            <person name="Clark A.G."/>
            <person name="Waterman M.S."/>
            <person name="Eichler E.E."/>
            <person name="Adams M.D."/>
            <person name="Hunkapiller M.W."/>
            <person name="Myers E.W."/>
            <person name="Venter J.C."/>
        </authorList>
    </citation>
    <scope>NUCLEOTIDE SEQUENCE [LARGE SCALE GENOMIC DNA]</scope>
</reference>
<reference key="6">
    <citation type="journal article" date="2004" name="Genome Res.">
        <title>The status, quality, and expansion of the NIH full-length cDNA project: the Mammalian Gene Collection (MGC).</title>
        <authorList>
            <consortium name="The MGC Project Team"/>
        </authorList>
    </citation>
    <scope>NUCLEOTIDE SEQUENCE [LARGE SCALE MRNA] (ISOFORM 1)</scope>
    <source>
        <tissue>Ovary</tissue>
    </source>
</reference>
<reference key="7">
    <citation type="journal article" date="2008" name="Proc. Natl. Acad. Sci. U.S.A.">
        <title>A quantitative atlas of mitotic phosphorylation.</title>
        <authorList>
            <person name="Dephoure N."/>
            <person name="Zhou C."/>
            <person name="Villen J."/>
            <person name="Beausoleil S.A."/>
            <person name="Bakalarski C.E."/>
            <person name="Elledge S.J."/>
            <person name="Gygi S.P."/>
        </authorList>
    </citation>
    <scope>PHOSPHORYLATION [LARGE SCALE ANALYSIS] AT SER-230</scope>
    <scope>IDENTIFICATION BY MASS SPECTROMETRY [LARGE SCALE ANALYSIS]</scope>
    <source>
        <tissue>Cervix carcinoma</tissue>
    </source>
</reference>
<reference key="8">
    <citation type="journal article" date="2009" name="Cancer Res.">
        <title>Regulation of estrogen-dependent transcription by the LIM cofactors CLIM and RLIM in breast cancer.</title>
        <authorList>
            <person name="Johnsen S.A."/>
            <person name="Guengoer C."/>
            <person name="Prenzel T."/>
            <person name="Riethdorf S."/>
            <person name="Riethdorf L."/>
            <person name="Taniguchi-Ishigaki N."/>
            <person name="Rau T."/>
            <person name="Tursun B."/>
            <person name="Furlow J.D."/>
            <person name="Sauter G."/>
            <person name="Scheffner M."/>
            <person name="Pantel K."/>
            <person name="Gannon F."/>
            <person name="Bach I."/>
        </authorList>
    </citation>
    <scope>INTERACTION WITH ESR1</scope>
    <scope>SUBCELLULAR LOCATION</scope>
    <scope>MISCELLANEOUS</scope>
</reference>
<reference key="9">
    <citation type="journal article" date="2009" name="Cell">
        <title>RNF12 is an X-encoded dose-dependent activator of X chromosome inactivation.</title>
        <authorList>
            <person name="Jonkers I."/>
            <person name="Barakat T.S."/>
            <person name="Achame E.M."/>
            <person name="Monkhorst K."/>
            <person name="Kenter A."/>
            <person name="Rentmeester E."/>
            <person name="Grosveld F."/>
            <person name="Grootegoed J.A."/>
            <person name="Gribnau J."/>
        </authorList>
    </citation>
    <scope>FUNCTION</scope>
</reference>
<reference key="10">
    <citation type="journal article" date="2009" name="J. Biol. Chem.">
        <title>Ubiquitin ligase RLIM modulates telomere length homeostasis through a proteolysis of TRF1.</title>
        <authorList>
            <person name="Her Y.R."/>
            <person name="Chung I.K."/>
        </authorList>
    </citation>
    <scope>FUNCTION</scope>
    <scope>INTERACTION WITH TERF1</scope>
    <scope>SUBCELLULAR LOCATION</scope>
</reference>
<reference key="11">
    <citation type="journal article" date="2012" name="Proc. Natl. Acad. Sci. U.S.A.">
        <title>N-terminal acetylome analyses and functional insights of the N-terminal acetyltransferase NatB.</title>
        <authorList>
            <person name="Van Damme P."/>
            <person name="Lasa M."/>
            <person name="Polevoda B."/>
            <person name="Gazquez C."/>
            <person name="Elosegui-Artola A."/>
            <person name="Kim D.S."/>
            <person name="De Juan-Pardo E."/>
            <person name="Demeyer K."/>
            <person name="Hole K."/>
            <person name="Larrea E."/>
            <person name="Timmerman E."/>
            <person name="Prieto J."/>
            <person name="Arnesen T."/>
            <person name="Sherman F."/>
            <person name="Gevaert K."/>
            <person name="Aldabe R."/>
        </authorList>
    </citation>
    <scope>ACETYLATION [LARGE SCALE ANALYSIS] AT MET-1</scope>
    <scope>IDENTIFICATION BY MASS SPECTROMETRY [LARGE SCALE ANALYSIS]</scope>
</reference>
<reference key="12">
    <citation type="journal article" date="2013" name="J. Proteome Res.">
        <title>Toward a comprehensive characterization of a human cancer cell phosphoproteome.</title>
        <authorList>
            <person name="Zhou H."/>
            <person name="Di Palma S."/>
            <person name="Preisinger C."/>
            <person name="Peng M."/>
            <person name="Polat A.N."/>
            <person name="Heck A.J."/>
            <person name="Mohammed S."/>
        </authorList>
    </citation>
    <scope>PHOSPHORYLATION [LARGE SCALE ANALYSIS] AT SER-195; SER-228; SER-230 AND SER-276</scope>
    <scope>IDENTIFICATION BY MASS SPECTROMETRY [LARGE SCALE ANALYSIS]</scope>
    <source>
        <tissue>Cervix carcinoma</tissue>
        <tissue>Erythroleukemia</tissue>
    </source>
</reference>
<reference key="13">
    <citation type="journal article" date="2015" name="Eur. J. Hum. Genet.">
        <title>Syndromic X-linked intellectual disability segregating with a missense variant in RLIM.</title>
        <authorList>
            <person name="Toenne E."/>
            <person name="Holdhus R."/>
            <person name="Stansberg C."/>
            <person name="Stray-Pedersen A."/>
            <person name="Petersen K."/>
            <person name="Brunner H.G."/>
            <person name="Gilissen C."/>
            <person name="Hoischen A."/>
            <person name="Prescott T."/>
            <person name="Steen V.M."/>
            <person name="Fiskerstrand T."/>
        </authorList>
    </citation>
    <scope>INVOLVEMENT IN TOKAS</scope>
    <scope>VARIANT TOKAS CYS-356</scope>
</reference>
<reference key="14">
    <citation type="journal article" date="2015" name="Proc. Natl. Acad. Sci. U.S.A.">
        <title>Neomorphic effects of recurrent somatic mutations in Yin Yang 1 in insulin-producing adenomas.</title>
        <authorList>
            <person name="Cromer M.K."/>
            <person name="Choi M."/>
            <person name="Nelson-Williams C."/>
            <person name="Fonseca A.L."/>
            <person name="Kunstman J.W."/>
            <person name="Korah R.M."/>
            <person name="Overton J.D."/>
            <person name="Mane S."/>
            <person name="Kenney B."/>
            <person name="Malchoff C.D."/>
            <person name="Stalberg P."/>
            <person name="Akerstroem G."/>
            <person name="Westin G."/>
            <person name="Hellman P."/>
            <person name="Carling T."/>
            <person name="Bjoerklund P."/>
            <person name="Lifton R.P."/>
        </authorList>
    </citation>
    <scope>VARIANT PRO-590</scope>
</reference>
<reference key="15">
    <citation type="journal article" date="2016" name="Mol. Psychiatry">
        <title>X-exome sequencing of 405 unresolved families identifies seven novel intellectual disability genes.</title>
        <authorList>
            <person name="Hu H."/>
            <person name="Haas S.A."/>
            <person name="Chelly J."/>
            <person name="Van Esch H."/>
            <person name="Raynaud M."/>
            <person name="de Brouwer A.P."/>
            <person name="Weinert S."/>
            <person name="Froyen G."/>
            <person name="Frints S.G."/>
            <person name="Laumonnier F."/>
            <person name="Zemojtel T."/>
            <person name="Love M.I."/>
            <person name="Richard H."/>
            <person name="Emde A.K."/>
            <person name="Bienek M."/>
            <person name="Jensen C."/>
            <person name="Hambrock M."/>
            <person name="Fischer U."/>
            <person name="Langnick C."/>
            <person name="Feldkamp M."/>
            <person name="Wissink-Lindhout W."/>
            <person name="Lebrun N."/>
            <person name="Castelnau L."/>
            <person name="Rucci J."/>
            <person name="Montjean R."/>
            <person name="Dorseuil O."/>
            <person name="Billuart P."/>
            <person name="Stuhlmann T."/>
            <person name="Shaw M."/>
            <person name="Corbett M.A."/>
            <person name="Gardner A."/>
            <person name="Willis-Owen S."/>
            <person name="Tan C."/>
            <person name="Friend K.L."/>
            <person name="Belet S."/>
            <person name="van Roozendaal K.E."/>
            <person name="Jimenez-Pocquet M."/>
            <person name="Moizard M.P."/>
            <person name="Ronce N."/>
            <person name="Sun R."/>
            <person name="O'Keeffe S."/>
            <person name="Chenna R."/>
            <person name="van Boemmel A."/>
            <person name="Goeke J."/>
            <person name="Hackett A."/>
            <person name="Field M."/>
            <person name="Christie L."/>
            <person name="Boyle J."/>
            <person name="Haan E."/>
            <person name="Nelson J."/>
            <person name="Turner G."/>
            <person name="Baynam G."/>
            <person name="Gillessen-Kaesbach G."/>
            <person name="Mueller U."/>
            <person name="Steinberger D."/>
            <person name="Budny B."/>
            <person name="Badura-Stronka M."/>
            <person name="Latos-Bielenska A."/>
            <person name="Ousager L.B."/>
            <person name="Wieacker P."/>
            <person name="Rodriguez Criado G."/>
            <person name="Bondeson M.L."/>
            <person name="Anneren G."/>
            <person name="Dufke A."/>
            <person name="Cohen M."/>
            <person name="Van Maldergem L."/>
            <person name="Vincent-Delorme C."/>
            <person name="Echenne B."/>
            <person name="Simon-Bouy B."/>
            <person name="Kleefstra T."/>
            <person name="Willemsen M."/>
            <person name="Fryns J.P."/>
            <person name="Devriendt K."/>
            <person name="Ullmann R."/>
            <person name="Vingron M."/>
            <person name="Wrogemann K."/>
            <person name="Wienker T.F."/>
            <person name="Tzschach A."/>
            <person name="van Bokhoven H."/>
            <person name="Gecz J."/>
            <person name="Jentsch T.J."/>
            <person name="Chen W."/>
            <person name="Ropers H.H."/>
            <person name="Kalscheuer V.M."/>
        </authorList>
    </citation>
    <scope>VARIANTS TOKAS CYS-387; ARG-587 AND CYS-599</scope>
</reference>
<keyword id="KW-0002">3D-structure</keyword>
<keyword id="KW-0007">Acetylation</keyword>
<keyword id="KW-0025">Alternative splicing</keyword>
<keyword id="KW-0225">Disease variant</keyword>
<keyword id="KW-0991">Intellectual disability</keyword>
<keyword id="KW-0479">Metal-binding</keyword>
<keyword id="KW-0539">Nucleus</keyword>
<keyword id="KW-0597">Phosphoprotein</keyword>
<keyword id="KW-1267">Proteomics identification</keyword>
<keyword id="KW-1185">Reference proteome</keyword>
<keyword id="KW-0804">Transcription</keyword>
<keyword id="KW-0805">Transcription regulation</keyword>
<keyword id="KW-0808">Transferase</keyword>
<keyword id="KW-0833">Ubl conjugation pathway</keyword>
<keyword id="KW-0862">Zinc</keyword>
<keyword id="KW-0863">Zinc-finger</keyword>